<comment type="function">
    <text evidence="1">Catalyzes the conversion of 1-hydroxy-2-methyl-2-(E)-butenyl 4-diphosphate (HMBPP) into a mixture of isopentenyl diphosphate (IPP) and dimethylallyl diphosphate (DMAPP). Acts in the terminal step of the DOXP/MEP pathway for isoprenoid precursor biosynthesis.</text>
</comment>
<comment type="catalytic activity">
    <reaction evidence="1">
        <text>isopentenyl diphosphate + 2 oxidized [2Fe-2S]-[ferredoxin] + H2O = (2E)-4-hydroxy-3-methylbut-2-enyl diphosphate + 2 reduced [2Fe-2S]-[ferredoxin] + 2 H(+)</text>
        <dbReference type="Rhea" id="RHEA:24488"/>
        <dbReference type="Rhea" id="RHEA-COMP:10000"/>
        <dbReference type="Rhea" id="RHEA-COMP:10001"/>
        <dbReference type="ChEBI" id="CHEBI:15377"/>
        <dbReference type="ChEBI" id="CHEBI:15378"/>
        <dbReference type="ChEBI" id="CHEBI:33737"/>
        <dbReference type="ChEBI" id="CHEBI:33738"/>
        <dbReference type="ChEBI" id="CHEBI:128753"/>
        <dbReference type="ChEBI" id="CHEBI:128769"/>
        <dbReference type="EC" id="1.17.7.4"/>
    </reaction>
</comment>
<comment type="catalytic activity">
    <reaction evidence="1">
        <text>dimethylallyl diphosphate + 2 oxidized [2Fe-2S]-[ferredoxin] + H2O = (2E)-4-hydroxy-3-methylbut-2-enyl diphosphate + 2 reduced [2Fe-2S]-[ferredoxin] + 2 H(+)</text>
        <dbReference type="Rhea" id="RHEA:24825"/>
        <dbReference type="Rhea" id="RHEA-COMP:10000"/>
        <dbReference type="Rhea" id="RHEA-COMP:10001"/>
        <dbReference type="ChEBI" id="CHEBI:15377"/>
        <dbReference type="ChEBI" id="CHEBI:15378"/>
        <dbReference type="ChEBI" id="CHEBI:33737"/>
        <dbReference type="ChEBI" id="CHEBI:33738"/>
        <dbReference type="ChEBI" id="CHEBI:57623"/>
        <dbReference type="ChEBI" id="CHEBI:128753"/>
        <dbReference type="EC" id="1.17.7.4"/>
    </reaction>
</comment>
<comment type="cofactor">
    <cofactor evidence="1">
        <name>[4Fe-4S] cluster</name>
        <dbReference type="ChEBI" id="CHEBI:49883"/>
    </cofactor>
    <text evidence="1">Binds 1 [4Fe-4S] cluster per subunit.</text>
</comment>
<comment type="pathway">
    <text evidence="1">Isoprenoid biosynthesis; dimethylallyl diphosphate biosynthesis; dimethylallyl diphosphate from (2E)-4-hydroxy-3-methylbutenyl diphosphate: step 1/1.</text>
</comment>
<comment type="pathway">
    <text evidence="1">Isoprenoid biosynthesis; isopentenyl diphosphate biosynthesis via DXP pathway; isopentenyl diphosphate from 1-deoxy-D-xylulose 5-phosphate: step 6/6.</text>
</comment>
<comment type="similarity">
    <text evidence="1">Belongs to the IspH family.</text>
</comment>
<gene>
    <name evidence="1" type="primary">ispH</name>
    <name type="ordered locus">EAT1b_0585</name>
</gene>
<protein>
    <recommendedName>
        <fullName evidence="1">4-hydroxy-3-methylbut-2-enyl diphosphate reductase</fullName>
        <shortName evidence="1">HMBPP reductase</shortName>
        <ecNumber evidence="1">1.17.7.4</ecNumber>
    </recommendedName>
</protein>
<sequence length="317" mass="35098">MKVKKISPRGYCYGVVDAMKLANEAVANPDLPRPIHILGMIVHNRHVTQAFEDLGVKTVDGEDRMQALETIDRGTVVFTAHGISPLVRKRAIEKGLTIVDASCPDVLVTHDLIREKTAEGYDVIYIGKHGHPEPEGAIGVAPDHVHLIQYEHEIDQLPSRLFERKILVTNQTTMSQWDVSALIETIQARYPHVEVHNEICNATQVRQEAVAEQAGDCELLIVVGDPKSNNSNRLAQVSKEIAGTNAYRIGDLSELDLNWLEGVETVAVTSGASTPTPITKKVIDFLSQYDPDDLSTHDKTPFLELRSILPKVKALRK</sequence>
<feature type="chain" id="PRO_1000204003" description="4-hydroxy-3-methylbut-2-enyl diphosphate reductase">
    <location>
        <begin position="1"/>
        <end position="317"/>
    </location>
</feature>
<feature type="active site" description="Proton donor" evidence="1">
    <location>
        <position position="133"/>
    </location>
</feature>
<feature type="binding site" evidence="1">
    <location>
        <position position="12"/>
    </location>
    <ligand>
        <name>[4Fe-4S] cluster</name>
        <dbReference type="ChEBI" id="CHEBI:49883"/>
    </ligand>
</feature>
<feature type="binding site" evidence="1">
    <location>
        <position position="43"/>
    </location>
    <ligand>
        <name>(2E)-4-hydroxy-3-methylbut-2-enyl diphosphate</name>
        <dbReference type="ChEBI" id="CHEBI:128753"/>
    </ligand>
</feature>
<feature type="binding site" evidence="1">
    <location>
        <position position="43"/>
    </location>
    <ligand>
        <name>dimethylallyl diphosphate</name>
        <dbReference type="ChEBI" id="CHEBI:57623"/>
    </ligand>
</feature>
<feature type="binding site" evidence="1">
    <location>
        <position position="43"/>
    </location>
    <ligand>
        <name>isopentenyl diphosphate</name>
        <dbReference type="ChEBI" id="CHEBI:128769"/>
    </ligand>
</feature>
<feature type="binding site" evidence="1">
    <location>
        <position position="81"/>
    </location>
    <ligand>
        <name>(2E)-4-hydroxy-3-methylbut-2-enyl diphosphate</name>
        <dbReference type="ChEBI" id="CHEBI:128753"/>
    </ligand>
</feature>
<feature type="binding site" evidence="1">
    <location>
        <position position="81"/>
    </location>
    <ligand>
        <name>dimethylallyl diphosphate</name>
        <dbReference type="ChEBI" id="CHEBI:57623"/>
    </ligand>
</feature>
<feature type="binding site" evidence="1">
    <location>
        <position position="81"/>
    </location>
    <ligand>
        <name>isopentenyl diphosphate</name>
        <dbReference type="ChEBI" id="CHEBI:128769"/>
    </ligand>
</feature>
<feature type="binding site" evidence="1">
    <location>
        <position position="103"/>
    </location>
    <ligand>
        <name>[4Fe-4S] cluster</name>
        <dbReference type="ChEBI" id="CHEBI:49883"/>
    </ligand>
</feature>
<feature type="binding site" evidence="1">
    <location>
        <position position="131"/>
    </location>
    <ligand>
        <name>(2E)-4-hydroxy-3-methylbut-2-enyl diphosphate</name>
        <dbReference type="ChEBI" id="CHEBI:128753"/>
    </ligand>
</feature>
<feature type="binding site" evidence="1">
    <location>
        <position position="131"/>
    </location>
    <ligand>
        <name>dimethylallyl diphosphate</name>
        <dbReference type="ChEBI" id="CHEBI:57623"/>
    </ligand>
</feature>
<feature type="binding site" evidence="1">
    <location>
        <position position="131"/>
    </location>
    <ligand>
        <name>isopentenyl diphosphate</name>
        <dbReference type="ChEBI" id="CHEBI:128769"/>
    </ligand>
</feature>
<feature type="binding site" evidence="1">
    <location>
        <position position="172"/>
    </location>
    <ligand>
        <name>(2E)-4-hydroxy-3-methylbut-2-enyl diphosphate</name>
        <dbReference type="ChEBI" id="CHEBI:128753"/>
    </ligand>
</feature>
<feature type="binding site" evidence="1">
    <location>
        <position position="200"/>
    </location>
    <ligand>
        <name>[4Fe-4S] cluster</name>
        <dbReference type="ChEBI" id="CHEBI:49883"/>
    </ligand>
</feature>
<feature type="binding site" evidence="1">
    <location>
        <position position="228"/>
    </location>
    <ligand>
        <name>(2E)-4-hydroxy-3-methylbut-2-enyl diphosphate</name>
        <dbReference type="ChEBI" id="CHEBI:128753"/>
    </ligand>
</feature>
<feature type="binding site" evidence="1">
    <location>
        <position position="228"/>
    </location>
    <ligand>
        <name>dimethylallyl diphosphate</name>
        <dbReference type="ChEBI" id="CHEBI:57623"/>
    </ligand>
</feature>
<feature type="binding site" evidence="1">
    <location>
        <position position="228"/>
    </location>
    <ligand>
        <name>isopentenyl diphosphate</name>
        <dbReference type="ChEBI" id="CHEBI:128769"/>
    </ligand>
</feature>
<feature type="binding site" evidence="1">
    <location>
        <position position="230"/>
    </location>
    <ligand>
        <name>(2E)-4-hydroxy-3-methylbut-2-enyl diphosphate</name>
        <dbReference type="ChEBI" id="CHEBI:128753"/>
    </ligand>
</feature>
<feature type="binding site" evidence="1">
    <location>
        <position position="230"/>
    </location>
    <ligand>
        <name>dimethylallyl diphosphate</name>
        <dbReference type="ChEBI" id="CHEBI:57623"/>
    </ligand>
</feature>
<feature type="binding site" evidence="1">
    <location>
        <position position="230"/>
    </location>
    <ligand>
        <name>isopentenyl diphosphate</name>
        <dbReference type="ChEBI" id="CHEBI:128769"/>
    </ligand>
</feature>
<feature type="binding site" evidence="1">
    <location>
        <position position="273"/>
    </location>
    <ligand>
        <name>(2E)-4-hydroxy-3-methylbut-2-enyl diphosphate</name>
        <dbReference type="ChEBI" id="CHEBI:128753"/>
    </ligand>
</feature>
<feature type="binding site" evidence="1">
    <location>
        <position position="273"/>
    </location>
    <ligand>
        <name>dimethylallyl diphosphate</name>
        <dbReference type="ChEBI" id="CHEBI:57623"/>
    </ligand>
</feature>
<feature type="binding site" evidence="1">
    <location>
        <position position="273"/>
    </location>
    <ligand>
        <name>isopentenyl diphosphate</name>
        <dbReference type="ChEBI" id="CHEBI:128769"/>
    </ligand>
</feature>
<reference key="1">
    <citation type="journal article" date="2011" name="J. Bacteriol.">
        <title>Complete genome sequence of the Thermophilic Bacterium Exiguobacterium sp. AT1b.</title>
        <authorList>
            <person name="Vishnivetskaya T.A."/>
            <person name="Lucas S."/>
            <person name="Copeland A."/>
            <person name="Lapidus A."/>
            <person name="Glavina del Rio T."/>
            <person name="Dalin E."/>
            <person name="Tice H."/>
            <person name="Bruce D.C."/>
            <person name="Goodwin L.A."/>
            <person name="Pitluck S."/>
            <person name="Saunders E."/>
            <person name="Brettin T."/>
            <person name="Detter C."/>
            <person name="Han C."/>
            <person name="Larimer F."/>
            <person name="Land M.L."/>
            <person name="Hauser L.J."/>
            <person name="Kyrpides N.C."/>
            <person name="Ovchinnikova G."/>
            <person name="Kathariou S."/>
            <person name="Ramaley R.F."/>
            <person name="Rodrigues D.F."/>
            <person name="Hendrix C."/>
            <person name="Richardson P."/>
            <person name="Tiedje J.M."/>
        </authorList>
    </citation>
    <scope>NUCLEOTIDE SEQUENCE [LARGE SCALE GENOMIC DNA]</scope>
    <source>
        <strain>ATCC BAA-1283 / AT1b</strain>
    </source>
</reference>
<name>ISPH_EXISA</name>
<organism>
    <name type="scientific">Exiguobacterium sp. (strain ATCC BAA-1283 / AT1b)</name>
    <dbReference type="NCBI Taxonomy" id="360911"/>
    <lineage>
        <taxon>Bacteria</taxon>
        <taxon>Bacillati</taxon>
        <taxon>Bacillota</taxon>
        <taxon>Bacilli</taxon>
        <taxon>Bacillales</taxon>
        <taxon>Bacillales Family XII. Incertae Sedis</taxon>
        <taxon>Exiguobacterium</taxon>
    </lineage>
</organism>
<dbReference type="EC" id="1.17.7.4" evidence="1"/>
<dbReference type="EMBL" id="CP001615">
    <property type="protein sequence ID" value="ACQ69517.1"/>
    <property type="molecule type" value="Genomic_DNA"/>
</dbReference>
<dbReference type="RefSeq" id="WP_012726636.1">
    <property type="nucleotide sequence ID" value="NC_012673.1"/>
</dbReference>
<dbReference type="SMR" id="C4L3Z5"/>
<dbReference type="STRING" id="360911.EAT1b_0585"/>
<dbReference type="KEGG" id="eat:EAT1b_0585"/>
<dbReference type="eggNOG" id="COG0761">
    <property type="taxonomic scope" value="Bacteria"/>
</dbReference>
<dbReference type="HOGENOM" id="CLU_027486_0_0_9"/>
<dbReference type="OrthoDB" id="9777362at2"/>
<dbReference type="UniPathway" id="UPA00056">
    <property type="reaction ID" value="UER00097"/>
</dbReference>
<dbReference type="UniPathway" id="UPA00059">
    <property type="reaction ID" value="UER00105"/>
</dbReference>
<dbReference type="Proteomes" id="UP000000716">
    <property type="component" value="Chromosome"/>
</dbReference>
<dbReference type="GO" id="GO:0051539">
    <property type="term" value="F:4 iron, 4 sulfur cluster binding"/>
    <property type="evidence" value="ECO:0007669"/>
    <property type="project" value="UniProtKB-UniRule"/>
</dbReference>
<dbReference type="GO" id="GO:0051745">
    <property type="term" value="F:4-hydroxy-3-methylbut-2-enyl diphosphate reductase activity"/>
    <property type="evidence" value="ECO:0007669"/>
    <property type="project" value="UniProtKB-UniRule"/>
</dbReference>
<dbReference type="GO" id="GO:0046872">
    <property type="term" value="F:metal ion binding"/>
    <property type="evidence" value="ECO:0007669"/>
    <property type="project" value="UniProtKB-KW"/>
</dbReference>
<dbReference type="GO" id="GO:0050992">
    <property type="term" value="P:dimethylallyl diphosphate biosynthetic process"/>
    <property type="evidence" value="ECO:0007669"/>
    <property type="project" value="UniProtKB-UniRule"/>
</dbReference>
<dbReference type="GO" id="GO:0019288">
    <property type="term" value="P:isopentenyl diphosphate biosynthetic process, methylerythritol 4-phosphate pathway"/>
    <property type="evidence" value="ECO:0007669"/>
    <property type="project" value="UniProtKB-UniRule"/>
</dbReference>
<dbReference type="GO" id="GO:0016114">
    <property type="term" value="P:terpenoid biosynthetic process"/>
    <property type="evidence" value="ECO:0007669"/>
    <property type="project" value="UniProtKB-UniRule"/>
</dbReference>
<dbReference type="CDD" id="cd13944">
    <property type="entry name" value="lytB_ispH"/>
    <property type="match status" value="1"/>
</dbReference>
<dbReference type="Gene3D" id="3.40.50.11270">
    <property type="match status" value="1"/>
</dbReference>
<dbReference type="Gene3D" id="3.40.1010.20">
    <property type="entry name" value="4-hydroxy-3-methylbut-2-enyl diphosphate reductase, catalytic domain"/>
    <property type="match status" value="2"/>
</dbReference>
<dbReference type="HAMAP" id="MF_00191">
    <property type="entry name" value="IspH"/>
    <property type="match status" value="1"/>
</dbReference>
<dbReference type="InterPro" id="IPR003451">
    <property type="entry name" value="LytB/IspH"/>
</dbReference>
<dbReference type="NCBIfam" id="TIGR00216">
    <property type="entry name" value="ispH_lytB"/>
    <property type="match status" value="1"/>
</dbReference>
<dbReference type="NCBIfam" id="NF002187">
    <property type="entry name" value="PRK01045.1-1"/>
    <property type="match status" value="1"/>
</dbReference>
<dbReference type="PANTHER" id="PTHR30426">
    <property type="entry name" value="4-HYDROXY-3-METHYLBUT-2-ENYL DIPHOSPHATE REDUCTASE"/>
    <property type="match status" value="1"/>
</dbReference>
<dbReference type="PANTHER" id="PTHR30426:SF0">
    <property type="entry name" value="4-HYDROXY-3-METHYLBUT-2-ENYL DIPHOSPHATE REDUCTASE"/>
    <property type="match status" value="1"/>
</dbReference>
<dbReference type="Pfam" id="PF02401">
    <property type="entry name" value="LYTB"/>
    <property type="match status" value="1"/>
</dbReference>
<keyword id="KW-0004">4Fe-4S</keyword>
<keyword id="KW-0408">Iron</keyword>
<keyword id="KW-0411">Iron-sulfur</keyword>
<keyword id="KW-0414">Isoprene biosynthesis</keyword>
<keyword id="KW-0479">Metal-binding</keyword>
<keyword id="KW-0560">Oxidoreductase</keyword>
<evidence type="ECO:0000255" key="1">
    <source>
        <dbReference type="HAMAP-Rule" id="MF_00191"/>
    </source>
</evidence>
<accession>C4L3Z5</accession>
<proteinExistence type="inferred from homology"/>